<dbReference type="EMBL" id="AP009247">
    <property type="protein sequence ID" value="BAF61931.1"/>
    <property type="molecule type" value="Genomic_DNA"/>
</dbReference>
<dbReference type="RefSeq" id="WP_011930200.1">
    <property type="nucleotide sequence ID" value="NC_009465.1"/>
</dbReference>
<dbReference type="SMR" id="A5CVV9"/>
<dbReference type="STRING" id="412965.COSY_0825"/>
<dbReference type="KEGG" id="vok:COSY_0825"/>
<dbReference type="eggNOG" id="COG0261">
    <property type="taxonomic scope" value="Bacteria"/>
</dbReference>
<dbReference type="HOGENOM" id="CLU_061463_3_1_6"/>
<dbReference type="OrthoDB" id="9813334at2"/>
<dbReference type="Proteomes" id="UP000000247">
    <property type="component" value="Chromosome"/>
</dbReference>
<dbReference type="GO" id="GO:0005737">
    <property type="term" value="C:cytoplasm"/>
    <property type="evidence" value="ECO:0007669"/>
    <property type="project" value="UniProtKB-ARBA"/>
</dbReference>
<dbReference type="GO" id="GO:1990904">
    <property type="term" value="C:ribonucleoprotein complex"/>
    <property type="evidence" value="ECO:0007669"/>
    <property type="project" value="UniProtKB-KW"/>
</dbReference>
<dbReference type="GO" id="GO:0005840">
    <property type="term" value="C:ribosome"/>
    <property type="evidence" value="ECO:0007669"/>
    <property type="project" value="UniProtKB-KW"/>
</dbReference>
<dbReference type="GO" id="GO:0019843">
    <property type="term" value="F:rRNA binding"/>
    <property type="evidence" value="ECO:0007669"/>
    <property type="project" value="UniProtKB-UniRule"/>
</dbReference>
<dbReference type="GO" id="GO:0003735">
    <property type="term" value="F:structural constituent of ribosome"/>
    <property type="evidence" value="ECO:0007669"/>
    <property type="project" value="InterPro"/>
</dbReference>
<dbReference type="GO" id="GO:0006412">
    <property type="term" value="P:translation"/>
    <property type="evidence" value="ECO:0007669"/>
    <property type="project" value="UniProtKB-UniRule"/>
</dbReference>
<dbReference type="HAMAP" id="MF_01363">
    <property type="entry name" value="Ribosomal_bL21"/>
    <property type="match status" value="1"/>
</dbReference>
<dbReference type="InterPro" id="IPR028909">
    <property type="entry name" value="bL21-like"/>
</dbReference>
<dbReference type="InterPro" id="IPR036164">
    <property type="entry name" value="bL21-like_sf"/>
</dbReference>
<dbReference type="InterPro" id="IPR001787">
    <property type="entry name" value="Ribosomal_bL21"/>
</dbReference>
<dbReference type="InterPro" id="IPR018258">
    <property type="entry name" value="Ribosomal_bL21_CS"/>
</dbReference>
<dbReference type="NCBIfam" id="TIGR00061">
    <property type="entry name" value="L21"/>
    <property type="match status" value="1"/>
</dbReference>
<dbReference type="PANTHER" id="PTHR21349">
    <property type="entry name" value="50S RIBOSOMAL PROTEIN L21"/>
    <property type="match status" value="1"/>
</dbReference>
<dbReference type="PANTHER" id="PTHR21349:SF0">
    <property type="entry name" value="LARGE RIBOSOMAL SUBUNIT PROTEIN BL21M"/>
    <property type="match status" value="1"/>
</dbReference>
<dbReference type="Pfam" id="PF00829">
    <property type="entry name" value="Ribosomal_L21p"/>
    <property type="match status" value="1"/>
</dbReference>
<dbReference type="SUPFAM" id="SSF141091">
    <property type="entry name" value="L21p-like"/>
    <property type="match status" value="1"/>
</dbReference>
<dbReference type="PROSITE" id="PS01169">
    <property type="entry name" value="RIBOSOMAL_L21"/>
    <property type="match status" value="1"/>
</dbReference>
<keyword id="KW-1185">Reference proteome</keyword>
<keyword id="KW-0687">Ribonucleoprotein</keyword>
<keyword id="KW-0689">Ribosomal protein</keyword>
<keyword id="KW-0694">RNA-binding</keyword>
<keyword id="KW-0699">rRNA-binding</keyword>
<evidence type="ECO:0000255" key="1">
    <source>
        <dbReference type="HAMAP-Rule" id="MF_01363"/>
    </source>
</evidence>
<evidence type="ECO:0000305" key="2"/>
<proteinExistence type="inferred from homology"/>
<comment type="function">
    <text evidence="1">This protein binds to 23S rRNA in the presence of protein L20.</text>
</comment>
<comment type="subunit">
    <text evidence="1">Part of the 50S ribosomal subunit. Contacts protein L20.</text>
</comment>
<comment type="similarity">
    <text evidence="1">Belongs to the bacterial ribosomal protein bL21 family.</text>
</comment>
<name>RL21_VESOH</name>
<organism>
    <name type="scientific">Vesicomyosocius okutanii subsp. Calyptogena okutanii (strain HA)</name>
    <dbReference type="NCBI Taxonomy" id="412965"/>
    <lineage>
        <taxon>Bacteria</taxon>
        <taxon>Pseudomonadati</taxon>
        <taxon>Pseudomonadota</taxon>
        <taxon>Gammaproteobacteria</taxon>
        <taxon>Candidatus Pseudothioglobaceae</taxon>
        <taxon>Candidatus Vesicomyosocius</taxon>
    </lineage>
</organism>
<accession>A5CVV9</accession>
<reference key="1">
    <citation type="journal article" date="2007" name="Curr. Biol.">
        <title>Reduced genome of the thioautotrophic intracellular symbiont in a deep-sea clam, Calyptogena okutanii.</title>
        <authorList>
            <person name="Kuwahara H."/>
            <person name="Yoshida T."/>
            <person name="Takaki Y."/>
            <person name="Shimamura S."/>
            <person name="Nishi S."/>
            <person name="Harada M."/>
            <person name="Matsuyama K."/>
            <person name="Takishita K."/>
            <person name="Kawato M."/>
            <person name="Uematsu K."/>
            <person name="Fujiwara Y."/>
            <person name="Sato T."/>
            <person name="Kato C."/>
            <person name="Kitagawa M."/>
            <person name="Kato I."/>
            <person name="Maruyama T."/>
        </authorList>
    </citation>
    <scope>NUCLEOTIDE SEQUENCE [LARGE SCALE GENOMIC DNA]</scope>
    <source>
        <strain>HA</strain>
    </source>
</reference>
<sequence length="103" mass="11639">MYAVIKTGGQQFKVKQGTILKIEKLEIEPGKKVTFKEVLIVSDGDDIQVGTPFVSKVTVEAKIISQGKGKKVHILKFRRRKHSMKQQGHRQLLTEIEIVKINA</sequence>
<protein>
    <recommendedName>
        <fullName evidence="1">Large ribosomal subunit protein bL21</fullName>
    </recommendedName>
    <alternativeName>
        <fullName evidence="2">50S ribosomal protein L21</fullName>
    </alternativeName>
</protein>
<feature type="chain" id="PRO_1000067914" description="Large ribosomal subunit protein bL21">
    <location>
        <begin position="1"/>
        <end position="103"/>
    </location>
</feature>
<gene>
    <name evidence="1" type="primary">rplU</name>
    <name type="ordered locus">COSY_0825</name>
</gene>